<keyword id="KW-0929">Antimicrobial</keyword>
<keyword id="KW-1015">Disulfide bond</keyword>
<keyword id="KW-0295">Fungicide</keyword>
<keyword id="KW-0611">Plant defense</keyword>
<keyword id="KW-1185">Reference proteome</keyword>
<keyword id="KW-0964">Secreted</keyword>
<keyword id="KW-0732">Signal</keyword>
<gene>
    <name type="ordered locus">At5g56368</name>
    <name type="ORF">MCD7</name>
</gene>
<comment type="subcellular location">
    <subcellularLocation>
        <location evidence="1">Secreted</location>
    </subcellularLocation>
</comment>
<comment type="similarity">
    <text evidence="3">Belongs to the DEFL family.</text>
</comment>
<comment type="caution">
    <text evidence="3">Lacks 1 of the 4 disulfide bonds, which are conserved features of the family.</text>
</comment>
<reference key="1">
    <citation type="journal article" date="1998" name="DNA Res.">
        <title>Structural analysis of Arabidopsis thaliana chromosome 5. IV. Sequence features of the regions of 1,456,315 bp covered by nineteen physically assigned P1 and TAC clones.</title>
        <authorList>
            <person name="Sato S."/>
            <person name="Kaneko T."/>
            <person name="Kotani H."/>
            <person name="Nakamura Y."/>
            <person name="Asamizu E."/>
            <person name="Miyajima N."/>
            <person name="Tabata S."/>
        </authorList>
    </citation>
    <scope>NUCLEOTIDE SEQUENCE [LARGE SCALE GENOMIC DNA]</scope>
    <source>
        <strain>cv. Columbia</strain>
    </source>
</reference>
<reference key="2">
    <citation type="journal article" date="2017" name="Plant J.">
        <title>Araport11: a complete reannotation of the Arabidopsis thaliana reference genome.</title>
        <authorList>
            <person name="Cheng C.Y."/>
            <person name="Krishnakumar V."/>
            <person name="Chan A.P."/>
            <person name="Thibaud-Nissen F."/>
            <person name="Schobel S."/>
            <person name="Town C.D."/>
        </authorList>
    </citation>
    <scope>GENOME REANNOTATION</scope>
    <source>
        <strain>cv. Columbia</strain>
    </source>
</reference>
<reference key="3">
    <citation type="journal article" date="2005" name="Plant Physiol.">
        <title>Genome organization of more than 300 defensin-like genes in Arabidopsis.</title>
        <authorList>
            <person name="Silverstein K.A.T."/>
            <person name="Graham M.A."/>
            <person name="Paape T.D."/>
            <person name="VandenBosch K.A."/>
        </authorList>
    </citation>
    <scope>GENE FAMILY</scope>
</reference>
<protein>
    <recommendedName>
        <fullName>Putative defensin-like protein 282</fullName>
    </recommendedName>
</protein>
<sequence length="93" mass="9750">MANATSFIALAYLLASALMTTVVLGNRQCVQAMDCTNVCSHGGLCTKNGKCVCWSPNVVINSGPPCWSDEMCFSTCGGNGGYCNYDIGGCFCQ</sequence>
<name>DF282_ARATH</name>
<dbReference type="EMBL" id="AB009049">
    <property type="status" value="NOT_ANNOTATED_CDS"/>
    <property type="molecule type" value="Genomic_DNA"/>
</dbReference>
<dbReference type="EMBL" id="CP002688">
    <property type="protein sequence ID" value="AED96754.1"/>
    <property type="molecule type" value="Genomic_DNA"/>
</dbReference>
<dbReference type="RefSeq" id="NP_001032081.1">
    <property type="nucleotide sequence ID" value="NM_001037004.1"/>
</dbReference>
<dbReference type="PaxDb" id="3702-AT5G56368.1"/>
<dbReference type="EnsemblPlants" id="AT5G56368.1">
    <property type="protein sequence ID" value="AT5G56368.1"/>
    <property type="gene ID" value="AT5G56368"/>
</dbReference>
<dbReference type="GeneID" id="3771519"/>
<dbReference type="Gramene" id="AT5G56368.1">
    <property type="protein sequence ID" value="AT5G56368.1"/>
    <property type="gene ID" value="AT5G56368"/>
</dbReference>
<dbReference type="KEGG" id="ath:AT5G56368"/>
<dbReference type="Araport" id="AT5G56368"/>
<dbReference type="TAIR" id="AT5G56368"/>
<dbReference type="HOGENOM" id="CLU_2402682_0_0_1"/>
<dbReference type="InParanoid" id="Q2V2Y0"/>
<dbReference type="OMA" id="YCNYDIG"/>
<dbReference type="PRO" id="PR:Q2V2Y0"/>
<dbReference type="Proteomes" id="UP000006548">
    <property type="component" value="Chromosome 5"/>
</dbReference>
<dbReference type="ExpressionAtlas" id="Q2V2Y0">
    <property type="expression patterns" value="baseline and differential"/>
</dbReference>
<dbReference type="GO" id="GO:0005576">
    <property type="term" value="C:extracellular region"/>
    <property type="evidence" value="ECO:0007669"/>
    <property type="project" value="UniProtKB-SubCell"/>
</dbReference>
<dbReference type="GO" id="GO:0050832">
    <property type="term" value="P:defense response to fungus"/>
    <property type="evidence" value="ECO:0007669"/>
    <property type="project" value="UniProtKB-KW"/>
</dbReference>
<dbReference type="GO" id="GO:0031640">
    <property type="term" value="P:killing of cells of another organism"/>
    <property type="evidence" value="ECO:0007669"/>
    <property type="project" value="UniProtKB-KW"/>
</dbReference>
<feature type="signal peptide" evidence="2">
    <location>
        <begin position="1"/>
        <end position="25"/>
    </location>
</feature>
<feature type="chain" id="PRO_0000379743" description="Putative defensin-like protein 282">
    <location>
        <begin position="26"/>
        <end position="93"/>
    </location>
</feature>
<feature type="disulfide bond" evidence="1">
    <location>
        <begin position="51"/>
        <end position="83"/>
    </location>
</feature>
<feature type="disulfide bond" evidence="1">
    <location>
        <begin position="66"/>
        <end position="90"/>
    </location>
</feature>
<feature type="disulfide bond" evidence="1">
    <location>
        <begin position="72"/>
        <end position="92"/>
    </location>
</feature>
<accession>Q2V2Y0</accession>
<proteinExistence type="inferred from homology"/>
<organism>
    <name type="scientific">Arabidopsis thaliana</name>
    <name type="common">Mouse-ear cress</name>
    <dbReference type="NCBI Taxonomy" id="3702"/>
    <lineage>
        <taxon>Eukaryota</taxon>
        <taxon>Viridiplantae</taxon>
        <taxon>Streptophyta</taxon>
        <taxon>Embryophyta</taxon>
        <taxon>Tracheophyta</taxon>
        <taxon>Spermatophyta</taxon>
        <taxon>Magnoliopsida</taxon>
        <taxon>eudicotyledons</taxon>
        <taxon>Gunneridae</taxon>
        <taxon>Pentapetalae</taxon>
        <taxon>rosids</taxon>
        <taxon>malvids</taxon>
        <taxon>Brassicales</taxon>
        <taxon>Brassicaceae</taxon>
        <taxon>Camelineae</taxon>
        <taxon>Arabidopsis</taxon>
    </lineage>
</organism>
<evidence type="ECO:0000250" key="1"/>
<evidence type="ECO:0000255" key="2"/>
<evidence type="ECO:0000305" key="3"/>